<dbReference type="EC" id="3.2.1.17"/>
<dbReference type="EMBL" id="L23757">
    <property type="status" value="NOT_ANNOTATED_CDS"/>
    <property type="molecule type" value="mRNA"/>
</dbReference>
<dbReference type="EMBL" id="U25810">
    <property type="protein sequence ID" value="AAC48683.1"/>
    <property type="molecule type" value="Genomic_DNA"/>
</dbReference>
<dbReference type="EMBL" id="BC112597">
    <property type="protein sequence ID" value="AAI12598.1"/>
    <property type="molecule type" value="mRNA"/>
</dbReference>
<dbReference type="EMBL" id="L19980">
    <property type="protein sequence ID" value="AAA99863.1"/>
    <property type="molecule type" value="mRNA"/>
</dbReference>
<dbReference type="PIR" id="C49315">
    <property type="entry name" value="C49315"/>
</dbReference>
<dbReference type="RefSeq" id="NP_001071627.1">
    <property type="nucleotide sequence ID" value="NM_001078159.1"/>
</dbReference>
<dbReference type="SMR" id="P80189"/>
<dbReference type="FunCoup" id="P80189">
    <property type="interactions" value="123"/>
</dbReference>
<dbReference type="STRING" id="9913.ENSBTAP00000038081"/>
<dbReference type="CAZy" id="GH22">
    <property type="family name" value="Glycoside Hydrolase Family 22"/>
</dbReference>
<dbReference type="PaxDb" id="9913-ENSBTAP00000038081"/>
<dbReference type="PeptideAtlas" id="P80189"/>
<dbReference type="Ensembl" id="ENSBTAT00000038266.3">
    <property type="protein sequence ID" value="ENSBTAP00000038081.2"/>
    <property type="gene ID" value="ENSBTAG00000026779.3"/>
</dbReference>
<dbReference type="GeneID" id="777776"/>
<dbReference type="KEGG" id="bta:777776"/>
<dbReference type="CTD" id="4069"/>
<dbReference type="VEuPathDB" id="HostDB:ENSBTAG00000026779"/>
<dbReference type="eggNOG" id="ENOG502S1S1">
    <property type="taxonomic scope" value="Eukaryota"/>
</dbReference>
<dbReference type="GeneTree" id="ENSGT00940000153832"/>
<dbReference type="HOGENOM" id="CLU_111620_0_1_1"/>
<dbReference type="InParanoid" id="P80189"/>
<dbReference type="OMA" id="KNACHIK"/>
<dbReference type="OrthoDB" id="17373at2759"/>
<dbReference type="TreeFam" id="TF324882"/>
<dbReference type="BRENDA" id="3.2.1.17">
    <property type="organism ID" value="908"/>
</dbReference>
<dbReference type="Proteomes" id="UP000009136">
    <property type="component" value="Chromosome 5"/>
</dbReference>
<dbReference type="Bgee" id="ENSBTAG00000026779">
    <property type="expression patterns" value="Expressed in monocyte and 103 other cell types or tissues"/>
</dbReference>
<dbReference type="GO" id="GO:0003796">
    <property type="term" value="F:lysozyme activity"/>
    <property type="evidence" value="ECO:0000318"/>
    <property type="project" value="GO_Central"/>
</dbReference>
<dbReference type="GO" id="GO:0050829">
    <property type="term" value="P:defense response to Gram-negative bacterium"/>
    <property type="evidence" value="ECO:0000318"/>
    <property type="project" value="GO_Central"/>
</dbReference>
<dbReference type="GO" id="GO:0050830">
    <property type="term" value="P:defense response to Gram-positive bacterium"/>
    <property type="evidence" value="ECO:0000318"/>
    <property type="project" value="GO_Central"/>
</dbReference>
<dbReference type="GO" id="GO:0031640">
    <property type="term" value="P:killing of cells of another organism"/>
    <property type="evidence" value="ECO:0007669"/>
    <property type="project" value="UniProtKB-KW"/>
</dbReference>
<dbReference type="CDD" id="cd16897">
    <property type="entry name" value="LYZ_C"/>
    <property type="match status" value="1"/>
</dbReference>
<dbReference type="FunFam" id="1.10.530.10:FF:000001">
    <property type="entry name" value="Lysozyme C"/>
    <property type="match status" value="1"/>
</dbReference>
<dbReference type="Gene3D" id="1.10.530.10">
    <property type="match status" value="1"/>
</dbReference>
<dbReference type="InterPro" id="IPR001916">
    <property type="entry name" value="Glyco_hydro_22"/>
</dbReference>
<dbReference type="InterPro" id="IPR019799">
    <property type="entry name" value="Glyco_hydro_22_CS"/>
</dbReference>
<dbReference type="InterPro" id="IPR000974">
    <property type="entry name" value="Glyco_hydro_22_lys"/>
</dbReference>
<dbReference type="InterPro" id="IPR023346">
    <property type="entry name" value="Lysozyme-like_dom_sf"/>
</dbReference>
<dbReference type="PANTHER" id="PTHR11407">
    <property type="entry name" value="LYSOZYME C"/>
    <property type="match status" value="1"/>
</dbReference>
<dbReference type="PANTHER" id="PTHR11407:SF28">
    <property type="entry name" value="LYSOZYME C"/>
    <property type="match status" value="1"/>
</dbReference>
<dbReference type="Pfam" id="PF00062">
    <property type="entry name" value="Lys"/>
    <property type="match status" value="1"/>
</dbReference>
<dbReference type="PRINTS" id="PR00137">
    <property type="entry name" value="LYSOZYME"/>
</dbReference>
<dbReference type="PRINTS" id="PR00135">
    <property type="entry name" value="LYZLACT"/>
</dbReference>
<dbReference type="SMART" id="SM00263">
    <property type="entry name" value="LYZ1"/>
    <property type="match status" value="1"/>
</dbReference>
<dbReference type="SUPFAM" id="SSF53955">
    <property type="entry name" value="Lysozyme-like"/>
    <property type="match status" value="1"/>
</dbReference>
<dbReference type="PROSITE" id="PS00128">
    <property type="entry name" value="GLYCOSYL_HYDROL_F22_1"/>
    <property type="match status" value="1"/>
</dbReference>
<dbReference type="PROSITE" id="PS51348">
    <property type="entry name" value="GLYCOSYL_HYDROL_F22_2"/>
    <property type="match status" value="1"/>
</dbReference>
<gene>
    <name type="primary">LYS</name>
    <name type="synonym">LZ</name>
</gene>
<sequence length="148" mass="16476">MKALLILGLLLFSVAVQGKVFERCELARSLKRFGMDNFRGISLANWMCLARWESNYNTQATNYNAGDQSTDYGIFQINSHWWCNDGKTPGAVNACHLPCGALLQDDITQAVACAKRVVSDPQGIRAWVAWRSHCQNQDLTSYIQGCGV</sequence>
<comment type="function">
    <text>Lysozymes have primarily a bacteriolytic function; those in tissues and body fluids are associated with the monocyte-macrophage system and enhance the activity of immunoagents.</text>
</comment>
<comment type="catalytic activity">
    <reaction>
        <text>Hydrolysis of (1-&gt;4)-beta-linkages between N-acetylmuramic acid and N-acetyl-D-glucosamine residues in a peptidoglycan and between N-acetyl-D-glucosamine residues in chitodextrins.</text>
        <dbReference type="EC" id="3.2.1.17"/>
    </reaction>
</comment>
<comment type="tissue specificity">
    <text>Expressed in blood cells.</text>
</comment>
<comment type="similarity">
    <text evidence="2">Belongs to the glycosyl hydrolase 22 family.</text>
</comment>
<evidence type="ECO:0000255" key="1"/>
<evidence type="ECO:0000255" key="2">
    <source>
        <dbReference type="PROSITE-ProRule" id="PRU00680"/>
    </source>
</evidence>
<evidence type="ECO:0000305" key="3"/>
<name>LYSCN_BOVIN</name>
<proteinExistence type="evidence at transcript level"/>
<reference key="1">
    <citation type="journal article" date="1993" name="J. Biol. Chem.">
        <title>Multiple cDNA sequences of bovine tracheal lysozyme.</title>
        <authorList>
            <person name="Takeuchi K."/>
            <person name="Irwin D.M."/>
            <person name="Gallup M."/>
            <person name="Shinbrot E."/>
            <person name="Kai H."/>
            <person name="Stewart C.B."/>
            <person name="Basbaum C."/>
        </authorList>
    </citation>
    <scope>NUCLEOTIDE SEQUENCE [MRNA]</scope>
    <source>
        <tissue>Trachea</tissue>
    </source>
</reference>
<reference key="2">
    <citation type="journal article" date="1996" name="Gene">
        <title>Structural deviations in a bovine low expression lysozyme-encoding gene active in tissues other than stomach.</title>
        <authorList>
            <person name="Henke M."/>
            <person name="Hobom G."/>
            <person name="Senft B."/>
            <person name="Seyfert H.-M."/>
        </authorList>
    </citation>
    <scope>NUCLEOTIDE SEQUENCE [GENOMIC DNA]</scope>
    <source>
        <strain>Deutsche Schwarzbunte</strain>
        <tissue>Blood</tissue>
    </source>
</reference>
<reference key="3">
    <citation type="journal article" date="1994" name="Mamm. Genome">
        <title>The macrophage expressed variant of the bovine lysozyme-encoding gene maps to chromosome 5q23.</title>
        <authorList>
            <person name="Brunner R.M."/>
            <person name="Henke M."/>
            <person name="Guerin G."/>
            <person name="Goldammer T."/>
            <person name="Seyfert H.M."/>
            <person name="Schwerin M."/>
        </authorList>
    </citation>
    <scope>NUCLEOTIDE SEQUENCE [MRNA]</scope>
</reference>
<reference key="4">
    <citation type="journal article" date="1993" name="Eur. J. Biochem.">
        <title>The primary structures and properties of non-stomach lysozymes of sheep and cow, and implication for functional divergence of lysozyme.</title>
        <authorList>
            <person name="Ito Y."/>
            <person name="Yamada H."/>
            <person name="Nakamura M."/>
            <person name="Yoshikawa A."/>
            <person name="Ueda T."/>
            <person name="Imoto T."/>
        </authorList>
    </citation>
    <scope>NUCLEOTIDE SEQUENCE</scope>
    <source>
        <tissue>Kidney</tissue>
    </source>
</reference>
<reference key="5">
    <citation type="submission" date="2006-01" db="EMBL/GenBank/DDBJ databases">
        <authorList>
            <consortium name="NIH - Mammalian Gene Collection (MGC) project"/>
        </authorList>
    </citation>
    <scope>NUCLEOTIDE SEQUENCE [LARGE SCALE MRNA]</scope>
    <source>
        <strain>Hereford</strain>
        <tissue>Testis</tissue>
    </source>
</reference>
<reference key="6">
    <citation type="journal article" date="1994" name="Gene">
        <title>Lysozyme-encoding bovine cDNAs from neutrophile granulocytes and mammary gland are derived from a different gene than stomach lysozymes.</title>
        <authorList>
            <person name="Steinhoff U.M."/>
            <person name="Senft B."/>
            <person name="Seyfert H.-M."/>
        </authorList>
    </citation>
    <scope>NUCLEOTIDE SEQUENCE [MRNA] OF 8-148</scope>
    <source>
        <tissue>Granulocyte</tissue>
        <tissue>Mammary gland</tissue>
    </source>
</reference>
<accession>P80189</accession>
<accession>Q29447</accession>
<accession>Q2KIL2</accession>
<feature type="signal peptide" evidence="1">
    <location>
        <begin position="1"/>
        <end position="18"/>
    </location>
</feature>
<feature type="chain" id="PRO_0000018458" description="Lysozyme C, non-stomach isozyme">
    <location>
        <begin position="19"/>
        <end position="148"/>
    </location>
</feature>
<feature type="domain" description="C-type lysozyme" evidence="2">
    <location>
        <begin position="19"/>
        <end position="148"/>
    </location>
</feature>
<feature type="active site" evidence="2">
    <location>
        <position position="53"/>
    </location>
</feature>
<feature type="active site" evidence="2">
    <location>
        <position position="71"/>
    </location>
</feature>
<feature type="disulfide bond" evidence="2">
    <location>
        <begin position="24"/>
        <end position="146"/>
    </location>
</feature>
<feature type="disulfide bond" evidence="2">
    <location>
        <begin position="48"/>
        <end position="134"/>
    </location>
</feature>
<feature type="disulfide bond" evidence="2">
    <location>
        <begin position="83"/>
        <end position="99"/>
    </location>
</feature>
<feature type="disulfide bond" evidence="2">
    <location>
        <begin position="95"/>
        <end position="113"/>
    </location>
</feature>
<feature type="sequence conflict" description="In Ref. 2 and 3." evidence="3" ref="2 3">
    <original>A</original>
    <variation>T</variation>
    <location>
        <position position="114"/>
    </location>
</feature>
<feature type="sequence conflict" description="In Ref. 2 and 3." evidence="3" ref="2 3">
    <original>V</original>
    <variation>D</variation>
    <location>
        <position position="117"/>
    </location>
</feature>
<organism>
    <name type="scientific">Bos taurus</name>
    <name type="common">Bovine</name>
    <dbReference type="NCBI Taxonomy" id="9913"/>
    <lineage>
        <taxon>Eukaryota</taxon>
        <taxon>Metazoa</taxon>
        <taxon>Chordata</taxon>
        <taxon>Craniata</taxon>
        <taxon>Vertebrata</taxon>
        <taxon>Euteleostomi</taxon>
        <taxon>Mammalia</taxon>
        <taxon>Eutheria</taxon>
        <taxon>Laurasiatheria</taxon>
        <taxon>Artiodactyla</taxon>
        <taxon>Ruminantia</taxon>
        <taxon>Pecora</taxon>
        <taxon>Bovidae</taxon>
        <taxon>Bovinae</taxon>
        <taxon>Bos</taxon>
    </lineage>
</organism>
<protein>
    <recommendedName>
        <fullName>Lysozyme C, non-stomach isozyme</fullName>
        <ecNumber>3.2.1.17</ecNumber>
    </recommendedName>
    <alternativeName>
        <fullName>1,4-beta-N-acetylmuramidase C</fullName>
    </alternativeName>
</protein>
<keyword id="KW-0929">Antimicrobial</keyword>
<keyword id="KW-0081">Bacteriolytic enzyme</keyword>
<keyword id="KW-1015">Disulfide bond</keyword>
<keyword id="KW-0326">Glycosidase</keyword>
<keyword id="KW-0378">Hydrolase</keyword>
<keyword id="KW-1185">Reference proteome</keyword>
<keyword id="KW-0732">Signal</keyword>